<organism>
    <name type="scientific">Synechocystis sp. (strain ATCC 27184 / PCC 6803 / Kazusa)</name>
    <dbReference type="NCBI Taxonomy" id="1111708"/>
    <lineage>
        <taxon>Bacteria</taxon>
        <taxon>Bacillati</taxon>
        <taxon>Cyanobacteriota</taxon>
        <taxon>Cyanophyceae</taxon>
        <taxon>Synechococcales</taxon>
        <taxon>Merismopediaceae</taxon>
        <taxon>Synechocystis</taxon>
    </lineage>
</organism>
<accession>P73754</accession>
<proteinExistence type="inferred from homology"/>
<protein>
    <recommendedName>
        <fullName>Metalloprotease slr0863</fullName>
        <ecNumber>3.4.-.-</ecNumber>
    </recommendedName>
</protein>
<evidence type="ECO:0000250" key="1"/>
<evidence type="ECO:0000305" key="2"/>
<sequence length="463" mass="50370">MNLATIKVTLPELIGRYQSQADFISIRLEQSEGTQISLRSDQVETLSEGIAMGGQVRVCHQGGWGFASFNRWEQLRQRLEEAIAAARLIGDDETLLAPIDPVQQTFINPLTGKDPRQISLADKKALCDHYNDLLRGTSDKITTTHVRYSDSQQTVLLATSEGTLLEQCWWDLEMRFAATAKDGNGVQVGRETTGSRRGYGDLENLDQVVQGAAQRAVKALTLPTVQGKTYPVVIDPILTGLFVHEAFGHLSEADMLYENPDFLEVMSLGRRFGPPELQIFDGAAPPGHRGSYGFDDEGVPASTTQLIKDGELVGRLHSRETAGKLGEKPTGNARCLNYHYPPIVRMTNTWIGRGETPVANLLDGIEEGIYAQNWLGGMTNGEMFTFSAGEAWMIRHGQLAEPVKDVTLSGNVFKTLANIEAIADDFYWDESGGCGKGGQNGLAVGCGGPSLRIRDVVVGGDAA</sequence>
<feature type="chain" id="PRO_0000142361" description="Metalloprotease slr0863">
    <location>
        <begin position="1"/>
        <end position="463"/>
    </location>
</feature>
<name>Y863_SYNY3</name>
<reference key="1">
    <citation type="journal article" date="1996" name="DNA Res.">
        <title>Sequence analysis of the genome of the unicellular cyanobacterium Synechocystis sp. strain PCC6803. II. Sequence determination of the entire genome and assignment of potential protein-coding regions.</title>
        <authorList>
            <person name="Kaneko T."/>
            <person name="Sato S."/>
            <person name="Kotani H."/>
            <person name="Tanaka A."/>
            <person name="Asamizu E."/>
            <person name="Nakamura Y."/>
            <person name="Miyajima N."/>
            <person name="Hirosawa M."/>
            <person name="Sugiura M."/>
            <person name="Sasamoto S."/>
            <person name="Kimura T."/>
            <person name="Hosouchi T."/>
            <person name="Matsuno A."/>
            <person name="Muraki A."/>
            <person name="Nakazaki N."/>
            <person name="Naruo K."/>
            <person name="Okumura S."/>
            <person name="Shimpo S."/>
            <person name="Takeuchi C."/>
            <person name="Wada T."/>
            <person name="Watanabe A."/>
            <person name="Yamada M."/>
            <person name="Yasuda M."/>
            <person name="Tabata S."/>
        </authorList>
    </citation>
    <scope>NUCLEOTIDE SEQUENCE [LARGE SCALE GENOMIC DNA]</scope>
    <source>
        <strain>ATCC 27184 / PCC 6803 / Kazusa</strain>
    </source>
</reference>
<gene>
    <name type="ordered locus">slr0863</name>
</gene>
<keyword id="KW-0378">Hydrolase</keyword>
<keyword id="KW-0482">Metalloprotease</keyword>
<keyword id="KW-0645">Protease</keyword>
<keyword id="KW-1185">Reference proteome</keyword>
<dbReference type="EC" id="3.4.-.-"/>
<dbReference type="EMBL" id="BA000022">
    <property type="protein sequence ID" value="BAA17806.1"/>
    <property type="molecule type" value="Genomic_DNA"/>
</dbReference>
<dbReference type="PIR" id="S74845">
    <property type="entry name" value="S74845"/>
</dbReference>
<dbReference type="SMR" id="P73754"/>
<dbReference type="PaxDb" id="1148-1652888"/>
<dbReference type="EnsemblBacteria" id="BAA17806">
    <property type="protein sequence ID" value="BAA17806"/>
    <property type="gene ID" value="BAA17806"/>
</dbReference>
<dbReference type="KEGG" id="syn:slr0863"/>
<dbReference type="eggNOG" id="COG0312">
    <property type="taxonomic scope" value="Bacteria"/>
</dbReference>
<dbReference type="InParanoid" id="P73754"/>
<dbReference type="PhylomeDB" id="P73754"/>
<dbReference type="Proteomes" id="UP000001425">
    <property type="component" value="Chromosome"/>
</dbReference>
<dbReference type="GO" id="GO:0005829">
    <property type="term" value="C:cytosol"/>
    <property type="evidence" value="ECO:0000318"/>
    <property type="project" value="GO_Central"/>
</dbReference>
<dbReference type="GO" id="GO:0008237">
    <property type="term" value="F:metallopeptidase activity"/>
    <property type="evidence" value="ECO:0007669"/>
    <property type="project" value="UniProtKB-KW"/>
</dbReference>
<dbReference type="GO" id="GO:0006508">
    <property type="term" value="P:proteolysis"/>
    <property type="evidence" value="ECO:0007669"/>
    <property type="project" value="UniProtKB-KW"/>
</dbReference>
<dbReference type="FunFam" id="3.30.2290.10:FF:000003">
    <property type="entry name" value="Zinc-dependent protease, TldD/PmbA family"/>
    <property type="match status" value="1"/>
</dbReference>
<dbReference type="Gene3D" id="3.30.2290.10">
    <property type="entry name" value="PmbA/TldD superfamily"/>
    <property type="match status" value="1"/>
</dbReference>
<dbReference type="InterPro" id="IPR045569">
    <property type="entry name" value="Metalloprtase-TldD/E_C"/>
</dbReference>
<dbReference type="InterPro" id="IPR045570">
    <property type="entry name" value="Metalloprtase-TldD/E_cen_dom"/>
</dbReference>
<dbReference type="InterPro" id="IPR002510">
    <property type="entry name" value="Metalloprtase-TldD/E_N"/>
</dbReference>
<dbReference type="InterPro" id="IPR051463">
    <property type="entry name" value="Peptidase_U62_metallo"/>
</dbReference>
<dbReference type="InterPro" id="IPR025502">
    <property type="entry name" value="TldD"/>
</dbReference>
<dbReference type="InterPro" id="IPR035068">
    <property type="entry name" value="TldD/PmbA_N"/>
</dbReference>
<dbReference type="InterPro" id="IPR036059">
    <property type="entry name" value="TldD/PmbA_sf"/>
</dbReference>
<dbReference type="PANTHER" id="PTHR30624:SF0">
    <property type="entry name" value="METALLOPROTEASE SLR0863"/>
    <property type="match status" value="1"/>
</dbReference>
<dbReference type="PANTHER" id="PTHR30624">
    <property type="entry name" value="UNCHARACTERIZED PROTEIN TLDD AND PMBA"/>
    <property type="match status" value="1"/>
</dbReference>
<dbReference type="Pfam" id="PF01523">
    <property type="entry name" value="PmbA_TldD_1st"/>
    <property type="match status" value="1"/>
</dbReference>
<dbReference type="Pfam" id="PF19290">
    <property type="entry name" value="PmbA_TldD_2nd"/>
    <property type="match status" value="1"/>
</dbReference>
<dbReference type="Pfam" id="PF19289">
    <property type="entry name" value="PmbA_TldD_3rd"/>
    <property type="match status" value="1"/>
</dbReference>
<dbReference type="PIRSF" id="PIRSF004919">
    <property type="entry name" value="TldD"/>
    <property type="match status" value="1"/>
</dbReference>
<dbReference type="SUPFAM" id="SSF111283">
    <property type="entry name" value="Putative modulator of DNA gyrase, PmbA/TldD"/>
    <property type="match status" value="1"/>
</dbReference>
<comment type="function">
    <text evidence="1">Probable metalloprotease.</text>
</comment>
<comment type="similarity">
    <text evidence="2">Belongs to the peptidase U62 family.</text>
</comment>